<name>NLP94_PHYCP</name>
<sequence>MKFIAVLIAAIASLSAVQAQKAIPYDTVVPIPSQTSKTDAQKAAVKYHPQLHIEDGCHPYAAVQADGAISDGLKWSGPQDGACKGSPLGSQVYARSTWVKGKWAIMYAWYFPMGQAPVPPVGLGHRNGWEYAVIWLDRPTADNSTLLGVSLSAAVGWSKEAPAKQKWMDGNSLKVSYYYNNIFRNTAVKYTEEKGEFQTLITWDQLPDAARNALINTDWDETPFNVARVKMPMKDGVFMEKLTGAYPF</sequence>
<keyword id="KW-0325">Glycoprotein</keyword>
<keyword id="KW-0964">Secreted</keyword>
<keyword id="KW-0732">Signal</keyword>
<keyword id="KW-0843">Virulence</keyword>
<feature type="signal peptide" evidence="2">
    <location>
        <begin position="1"/>
        <end position="19"/>
    </location>
</feature>
<feature type="chain" id="PRO_5015349025" description="NLP effector protein Pc121494">
    <location>
        <begin position="20"/>
        <end position="248"/>
    </location>
</feature>
<feature type="short sequence motif" description="Hepta-peptide GHRHDWE motif" evidence="1">
    <location>
        <begin position="124"/>
        <end position="130"/>
    </location>
</feature>
<feature type="glycosylation site" description="N-linked (GlcNAc...) asparagine" evidence="3">
    <location>
        <position position="143"/>
    </location>
</feature>
<proteinExistence type="evidence at transcript level"/>
<reference key="1">
    <citation type="submission" date="2017-05" db="EMBL/GenBank/DDBJ databases">
        <authorList>
            <person name="Song R."/>
            <person name="Chenine A.L."/>
            <person name="Ruprecht R.M."/>
        </authorList>
    </citation>
    <scope>NUCLEOTIDE SEQUENCE [MRNA]</scope>
    <source>
        <strain>Pc537</strain>
    </source>
</reference>
<reference key="2">
    <citation type="journal article" date="2018" name="Mol. Genet. Genomics">
        <title>Identification and functional analysis of the NLP-encoding genes from the phytopathogenic oomycete Phytophthora capsici.</title>
        <authorList>
            <person name="Chen X.R."/>
            <person name="Huang S.X."/>
            <person name="Zhang Y."/>
            <person name="Sheng G.L."/>
            <person name="Li Y.P."/>
            <person name="Zhu F."/>
        </authorList>
    </citation>
    <scope>NUCLEOTIDE SEQUENCE [MRNA]</scope>
    <scope>FUNCTION</scope>
    <scope>DOMAIN</scope>
    <scope>INDUCTION</scope>
    <source>
        <strain>Pc537</strain>
    </source>
</reference>
<comment type="function">
    <text evidence="4">Secreted effector that contributes strongly to virulence during infection by P.capsici.</text>
</comment>
<comment type="subcellular location">
    <subcellularLocation>
        <location evidence="7">Secreted</location>
    </subcellularLocation>
</comment>
<comment type="induction">
    <text evidence="4">Differentially expressed during the developmental and plant infection phases.</text>
</comment>
<comment type="domain">
    <text evidence="7">Key residues/motif important for the effector activities are degenerated in most NLPs, including the nlp24 peptide consisting of the conserved region I (11-aa immunogenic part) and conserved region II (the heptapeptide GHRHDWE motif) that is important for phytotoxic activity.</text>
</comment>
<comment type="similarity">
    <text evidence="6">Belongs to the Necrosis inducing protein (NPP1) family.</text>
</comment>
<gene>
    <name evidence="5" type="ORF">Pc121494</name>
</gene>
<accession>A0A2R2Z575</accession>
<dbReference type="EMBL" id="MF135591">
    <property type="protein sequence ID" value="AUD40037.1"/>
    <property type="molecule type" value="mRNA"/>
</dbReference>
<dbReference type="SMR" id="A0A2R2Z575"/>
<dbReference type="VEuPathDB" id="FungiDB:DVH05_019193"/>
<dbReference type="OrthoDB" id="89086at2759"/>
<dbReference type="PHI-base" id="PHI:8059"/>
<dbReference type="GO" id="GO:0005576">
    <property type="term" value="C:extracellular region"/>
    <property type="evidence" value="ECO:0007669"/>
    <property type="project" value="UniProtKB-SubCell"/>
</dbReference>
<dbReference type="InterPro" id="IPR008701">
    <property type="entry name" value="NPP1"/>
</dbReference>
<dbReference type="PANTHER" id="PTHR33657">
    <property type="entry name" value="DOMAIN PROTEIN, PUTATIVE (AFU_ORTHOLOGUE AFUA_5G00600)-RELATED"/>
    <property type="match status" value="1"/>
</dbReference>
<dbReference type="PANTHER" id="PTHR33657:SF8">
    <property type="entry name" value="DOMAIN PROTEIN, PUTATIVE (AFU_ORTHOLOGUE AFUA_5G00600)-RELATED"/>
    <property type="match status" value="1"/>
</dbReference>
<dbReference type="Pfam" id="PF05630">
    <property type="entry name" value="NPP1"/>
    <property type="match status" value="1"/>
</dbReference>
<dbReference type="PIRSF" id="PIRSF029958">
    <property type="entry name" value="Necrosis-inducing_protein"/>
    <property type="match status" value="1"/>
</dbReference>
<evidence type="ECO:0000250" key="1">
    <source>
        <dbReference type="UniProtKB" id="L7NCS1"/>
    </source>
</evidence>
<evidence type="ECO:0000255" key="2"/>
<evidence type="ECO:0000255" key="3">
    <source>
        <dbReference type="PROSITE-ProRule" id="PRU00498"/>
    </source>
</evidence>
<evidence type="ECO:0000269" key="4">
    <source>
    </source>
</evidence>
<evidence type="ECO:0000303" key="5">
    <source>
    </source>
</evidence>
<evidence type="ECO:0000305" key="6"/>
<evidence type="ECO:0000305" key="7">
    <source>
    </source>
</evidence>
<protein>
    <recommendedName>
        <fullName evidence="5">NLP effector protein Pc121494</fullName>
    </recommendedName>
    <alternativeName>
        <fullName evidence="5">Necrosis-inducing Pc121494</fullName>
    </alternativeName>
    <alternativeName>
        <fullName evidence="5">Nep1-like protein Pc121494</fullName>
    </alternativeName>
</protein>
<organism>
    <name type="scientific">Phytophthora capsici</name>
    <dbReference type="NCBI Taxonomy" id="4784"/>
    <lineage>
        <taxon>Eukaryota</taxon>
        <taxon>Sar</taxon>
        <taxon>Stramenopiles</taxon>
        <taxon>Oomycota</taxon>
        <taxon>Peronosporales</taxon>
        <taxon>Peronosporaceae</taxon>
        <taxon>Phytophthora</taxon>
    </lineage>
</organism>